<organism>
    <name type="scientific">Mycolicibacterium gilvum (strain PYR-GCK)</name>
    <name type="common">Mycobacterium gilvum (strain PYR-GCK)</name>
    <dbReference type="NCBI Taxonomy" id="350054"/>
    <lineage>
        <taxon>Bacteria</taxon>
        <taxon>Bacillati</taxon>
        <taxon>Actinomycetota</taxon>
        <taxon>Actinomycetes</taxon>
        <taxon>Mycobacteriales</taxon>
        <taxon>Mycobacteriaceae</taxon>
        <taxon>Mycolicibacterium</taxon>
    </lineage>
</organism>
<feature type="chain" id="PRO_0000335729" description="4-diphosphocytidyl-2-C-methyl-D-erythritol kinase">
    <location>
        <begin position="1"/>
        <end position="322"/>
    </location>
</feature>
<feature type="active site" evidence="1">
    <location>
        <position position="25"/>
    </location>
</feature>
<feature type="active site" evidence="1">
    <location>
        <position position="152"/>
    </location>
</feature>
<feature type="binding site" evidence="1">
    <location>
        <begin position="110"/>
        <end position="120"/>
    </location>
    <ligand>
        <name>ATP</name>
        <dbReference type="ChEBI" id="CHEBI:30616"/>
    </ligand>
</feature>
<evidence type="ECO:0000255" key="1">
    <source>
        <dbReference type="HAMAP-Rule" id="MF_00061"/>
    </source>
</evidence>
<name>ISPE_MYCGI</name>
<proteinExistence type="inferred from homology"/>
<accession>A4T6N7</accession>
<gene>
    <name evidence="1" type="primary">ispE</name>
    <name type="ordered locus">Mflv_1934</name>
</gene>
<sequence length="322" mass="33035">MSARDGNTASEWVPTGSVTVRVPGKVNLYLDVGDRRQDGYHELTTVFHAVSLLDEVTVRTADTLSLEHVGEGADSLPTDERNLAWRAAELMAEHVGRAPDVAISIEKTIPVAGGMAGGSADAAAVLVAMNSLWELGVPRRDLHALAAQLGSDVPFALHGGTALGTGRGEELATVLTRNTFHWVLAFSPGGLSTAKVFAEIDRLRAEEDRTLPPRLESPEPVLAALASGDPAQLAPLLGNDLQPAALSLDPALRRTLRAGLDAGALAGLVSGSGPTCAFLCTSAGAAVDIGTDLAGAGVCRTVRVASGPVQGARVVPAPSTAG</sequence>
<keyword id="KW-0067">ATP-binding</keyword>
<keyword id="KW-0414">Isoprene biosynthesis</keyword>
<keyword id="KW-0418">Kinase</keyword>
<keyword id="KW-0547">Nucleotide-binding</keyword>
<keyword id="KW-0808">Transferase</keyword>
<comment type="function">
    <text evidence="1">Catalyzes the phosphorylation of the position 2 hydroxy group of 4-diphosphocytidyl-2C-methyl-D-erythritol.</text>
</comment>
<comment type="catalytic activity">
    <reaction evidence="1">
        <text>4-CDP-2-C-methyl-D-erythritol + ATP = 4-CDP-2-C-methyl-D-erythritol 2-phosphate + ADP + H(+)</text>
        <dbReference type="Rhea" id="RHEA:18437"/>
        <dbReference type="ChEBI" id="CHEBI:15378"/>
        <dbReference type="ChEBI" id="CHEBI:30616"/>
        <dbReference type="ChEBI" id="CHEBI:57823"/>
        <dbReference type="ChEBI" id="CHEBI:57919"/>
        <dbReference type="ChEBI" id="CHEBI:456216"/>
        <dbReference type="EC" id="2.7.1.148"/>
    </reaction>
</comment>
<comment type="pathway">
    <text evidence="1">Isoprenoid biosynthesis; isopentenyl diphosphate biosynthesis via DXP pathway; isopentenyl diphosphate from 1-deoxy-D-xylulose 5-phosphate: step 3/6.</text>
</comment>
<comment type="similarity">
    <text evidence="1">Belongs to the GHMP kinase family. IspE subfamily.</text>
</comment>
<reference key="1">
    <citation type="submission" date="2007-04" db="EMBL/GenBank/DDBJ databases">
        <title>Complete sequence of chromosome of Mycobacterium gilvum PYR-GCK.</title>
        <authorList>
            <consortium name="US DOE Joint Genome Institute"/>
            <person name="Copeland A."/>
            <person name="Lucas S."/>
            <person name="Lapidus A."/>
            <person name="Barry K."/>
            <person name="Detter J.C."/>
            <person name="Glavina del Rio T."/>
            <person name="Hammon N."/>
            <person name="Israni S."/>
            <person name="Dalin E."/>
            <person name="Tice H."/>
            <person name="Pitluck S."/>
            <person name="Chain P."/>
            <person name="Malfatti S."/>
            <person name="Shin M."/>
            <person name="Vergez L."/>
            <person name="Schmutz J."/>
            <person name="Larimer F."/>
            <person name="Land M."/>
            <person name="Hauser L."/>
            <person name="Kyrpides N."/>
            <person name="Mikhailova N."/>
            <person name="Miller C."/>
            <person name="Richardson P."/>
        </authorList>
    </citation>
    <scope>NUCLEOTIDE SEQUENCE [LARGE SCALE GENOMIC DNA]</scope>
    <source>
        <strain>PYR-GCK</strain>
    </source>
</reference>
<dbReference type="EC" id="2.7.1.148" evidence="1"/>
<dbReference type="EMBL" id="CP000656">
    <property type="protein sequence ID" value="ABP44414.1"/>
    <property type="molecule type" value="Genomic_DNA"/>
</dbReference>
<dbReference type="SMR" id="A4T6N7"/>
<dbReference type="STRING" id="350054.Mflv_1934"/>
<dbReference type="KEGG" id="mgi:Mflv_1934"/>
<dbReference type="eggNOG" id="COG1947">
    <property type="taxonomic scope" value="Bacteria"/>
</dbReference>
<dbReference type="HOGENOM" id="CLU_053057_1_1_11"/>
<dbReference type="OrthoDB" id="3173073at2"/>
<dbReference type="UniPathway" id="UPA00056">
    <property type="reaction ID" value="UER00094"/>
</dbReference>
<dbReference type="GO" id="GO:0050515">
    <property type="term" value="F:4-(cytidine 5'-diphospho)-2-C-methyl-D-erythritol kinase activity"/>
    <property type="evidence" value="ECO:0007669"/>
    <property type="project" value="UniProtKB-UniRule"/>
</dbReference>
<dbReference type="GO" id="GO:0005524">
    <property type="term" value="F:ATP binding"/>
    <property type="evidence" value="ECO:0007669"/>
    <property type="project" value="UniProtKB-UniRule"/>
</dbReference>
<dbReference type="GO" id="GO:0019288">
    <property type="term" value="P:isopentenyl diphosphate biosynthetic process, methylerythritol 4-phosphate pathway"/>
    <property type="evidence" value="ECO:0007669"/>
    <property type="project" value="UniProtKB-UniRule"/>
</dbReference>
<dbReference type="GO" id="GO:0016114">
    <property type="term" value="P:terpenoid biosynthetic process"/>
    <property type="evidence" value="ECO:0007669"/>
    <property type="project" value="InterPro"/>
</dbReference>
<dbReference type="Gene3D" id="3.30.230.10">
    <property type="match status" value="1"/>
</dbReference>
<dbReference type="Gene3D" id="3.30.70.890">
    <property type="entry name" value="GHMP kinase, C-terminal domain"/>
    <property type="match status" value="1"/>
</dbReference>
<dbReference type="HAMAP" id="MF_00061">
    <property type="entry name" value="IspE"/>
    <property type="match status" value="1"/>
</dbReference>
<dbReference type="InterPro" id="IPR013750">
    <property type="entry name" value="GHMP_kinase_C_dom"/>
</dbReference>
<dbReference type="InterPro" id="IPR036554">
    <property type="entry name" value="GHMP_kinase_C_sf"/>
</dbReference>
<dbReference type="InterPro" id="IPR006204">
    <property type="entry name" value="GHMP_kinase_N_dom"/>
</dbReference>
<dbReference type="InterPro" id="IPR004424">
    <property type="entry name" value="IspE"/>
</dbReference>
<dbReference type="InterPro" id="IPR020568">
    <property type="entry name" value="Ribosomal_Su5_D2-typ_SF"/>
</dbReference>
<dbReference type="InterPro" id="IPR014721">
    <property type="entry name" value="Ribsml_uS5_D2-typ_fold_subgr"/>
</dbReference>
<dbReference type="NCBIfam" id="TIGR00154">
    <property type="entry name" value="ispE"/>
    <property type="match status" value="1"/>
</dbReference>
<dbReference type="NCBIfam" id="NF002870">
    <property type="entry name" value="PRK03188.1"/>
    <property type="match status" value="1"/>
</dbReference>
<dbReference type="PANTHER" id="PTHR43527">
    <property type="entry name" value="4-DIPHOSPHOCYTIDYL-2-C-METHYL-D-ERYTHRITOL KINASE, CHLOROPLASTIC"/>
    <property type="match status" value="1"/>
</dbReference>
<dbReference type="PANTHER" id="PTHR43527:SF2">
    <property type="entry name" value="4-DIPHOSPHOCYTIDYL-2-C-METHYL-D-ERYTHRITOL KINASE, CHLOROPLASTIC"/>
    <property type="match status" value="1"/>
</dbReference>
<dbReference type="Pfam" id="PF08544">
    <property type="entry name" value="GHMP_kinases_C"/>
    <property type="match status" value="1"/>
</dbReference>
<dbReference type="Pfam" id="PF00288">
    <property type="entry name" value="GHMP_kinases_N"/>
    <property type="match status" value="1"/>
</dbReference>
<dbReference type="PIRSF" id="PIRSF010376">
    <property type="entry name" value="IspE"/>
    <property type="match status" value="1"/>
</dbReference>
<dbReference type="SUPFAM" id="SSF55060">
    <property type="entry name" value="GHMP Kinase, C-terminal domain"/>
    <property type="match status" value="1"/>
</dbReference>
<dbReference type="SUPFAM" id="SSF54211">
    <property type="entry name" value="Ribosomal protein S5 domain 2-like"/>
    <property type="match status" value="1"/>
</dbReference>
<protein>
    <recommendedName>
        <fullName evidence="1">4-diphosphocytidyl-2-C-methyl-D-erythritol kinase</fullName>
        <shortName evidence="1">CMK</shortName>
        <ecNumber evidence="1">2.7.1.148</ecNumber>
    </recommendedName>
    <alternativeName>
        <fullName evidence="1">4-(cytidine-5'-diphospho)-2-C-methyl-D-erythritol kinase</fullName>
    </alternativeName>
</protein>